<evidence type="ECO:0000250" key="1"/>
<evidence type="ECO:0000269" key="2">
    <source>
    </source>
</evidence>
<evidence type="ECO:0000305" key="3"/>
<feature type="chain" id="PRO_0000415752" description="Probable aldo-keto reductase 1">
    <location>
        <begin position="1"/>
        <end position="346"/>
    </location>
</feature>
<feature type="active site" description="Proton donor" evidence="1">
    <location>
        <position position="62"/>
    </location>
</feature>
<feature type="binding site" evidence="1">
    <location>
        <position position="130"/>
    </location>
    <ligand>
        <name>substrate</name>
    </ligand>
</feature>
<feature type="binding site" evidence="1">
    <location>
        <begin position="209"/>
        <end position="218"/>
    </location>
    <ligand>
        <name>NADP(+)</name>
        <dbReference type="ChEBI" id="CHEBI:58349"/>
    </ligand>
</feature>
<feature type="sequence conflict" description="In Ref. 2; ACN56468." evidence="3" ref="2">
    <original>E</original>
    <variation>K</variation>
    <location>
        <position position="102"/>
    </location>
</feature>
<feature type="sequence conflict" description="In Ref. 2; ACN56468." evidence="3" ref="2">
    <original>TG</original>
    <variation>AS</variation>
    <location>
        <begin position="114"/>
        <end position="115"/>
    </location>
</feature>
<feature type="sequence conflict" description="In Ref. 2; ACN56468." evidence="3" ref="2">
    <original>H</original>
    <variation>R</variation>
    <location>
        <position position="130"/>
    </location>
</feature>
<feature type="sequence conflict" description="In Ref. 2; ACN56468." evidence="3" ref="2">
    <original>F</original>
    <variation>S</variation>
    <location>
        <position position="310"/>
    </location>
</feature>
<proteinExistence type="evidence at transcript level"/>
<keyword id="KW-0521">NADP</keyword>
<keyword id="KW-0560">Oxidoreductase</keyword>
<keyword id="KW-1185">Reference proteome</keyword>
<comment type="function">
    <text evidence="2">May interfere with the nodulation process and inhibits nodule development.</text>
</comment>
<comment type="tissue specificity">
    <text evidence="2">Expressed in roots. Detected in leaves, stems and mature nodules.</text>
</comment>
<comment type="developmental stage">
    <text evidence="2">Down-regulated as the nodules mature.</text>
</comment>
<comment type="induction">
    <text evidence="2">Not induced by auxin. Up-regulated in leaves by ethylene and salt stress. Down-regulated by abscisic acid.</text>
</comment>
<comment type="similarity">
    <text evidence="3">Belongs to the aldo/keto reductase 13 family.</text>
</comment>
<sequence>MTQAQIQPVKLGTQGFEVSKLGFGCMGLTGAYNDPLQEQDGISVIKYAFSKGITFFDTADVYGANANELLVGKALKQLPREKIQIATKFGIASRGFPDMKIEGSPEYVRSCCETGLKRLDVEYIDLYYQHRVDTSVPIEETVGELKKLVEEGKVKYIGLSEASPDTIRRAHAIHPITAVQIEWSLWTRDIEEEIVPLCRELGIGIVPYSPLGRGFFGGKGVVENVPTNSSLKAHPRFQAENLDKNKNIYERIEGLAKKHQATPAQLALAWVLQQGEDVVPIPGTTKIKNLDQNIGALAVKLSEKDLREIFEAVPIGDVAGGRYYNGLDHFSWKYANTPPKDSKIST</sequence>
<protein>
    <recommendedName>
        <fullName>Probable aldo-keto reductase 1</fullName>
        <shortName>GmAKR1</shortName>
        <ecNumber>1.1.1.-</ecNumber>
    </recommendedName>
</protein>
<dbReference type="EC" id="1.1.1.-"/>
<dbReference type="EMBL" id="BT094946">
    <property type="protein sequence ID" value="ACU19234.1"/>
    <property type="molecule type" value="mRNA"/>
</dbReference>
<dbReference type="EMBL" id="FJ430074">
    <property type="protein sequence ID" value="ACN56468.1"/>
    <property type="molecule type" value="mRNA"/>
</dbReference>
<dbReference type="RefSeq" id="NP_001236007.1">
    <property type="nucleotide sequence ID" value="NM_001249078.1"/>
</dbReference>
<dbReference type="SMR" id="C6TBN2"/>
<dbReference type="STRING" id="3847.C6TBN2"/>
<dbReference type="PaxDb" id="3847-GLYMA03G40860.1"/>
<dbReference type="GeneID" id="100301897"/>
<dbReference type="KEGG" id="gmx:100301897"/>
<dbReference type="eggNOG" id="KOG1575">
    <property type="taxonomic scope" value="Eukaryota"/>
</dbReference>
<dbReference type="InParanoid" id="C6TBN2"/>
<dbReference type="OrthoDB" id="37537at2759"/>
<dbReference type="Proteomes" id="UP000008827">
    <property type="component" value="Unplaced"/>
</dbReference>
<dbReference type="GO" id="GO:0005737">
    <property type="term" value="C:cytoplasm"/>
    <property type="evidence" value="ECO:0000318"/>
    <property type="project" value="GO_Central"/>
</dbReference>
<dbReference type="GO" id="GO:0004033">
    <property type="term" value="F:aldo-keto reductase (NADPH) activity"/>
    <property type="evidence" value="ECO:0000318"/>
    <property type="project" value="GO_Central"/>
</dbReference>
<dbReference type="CDD" id="cd19145">
    <property type="entry name" value="AKR_AKR13D1"/>
    <property type="match status" value="1"/>
</dbReference>
<dbReference type="Gene3D" id="3.20.20.100">
    <property type="entry name" value="NADP-dependent oxidoreductase domain"/>
    <property type="match status" value="1"/>
</dbReference>
<dbReference type="InterPro" id="IPR050791">
    <property type="entry name" value="Aldo-Keto_reductase"/>
</dbReference>
<dbReference type="InterPro" id="IPR023210">
    <property type="entry name" value="NADP_OxRdtase_dom"/>
</dbReference>
<dbReference type="InterPro" id="IPR036812">
    <property type="entry name" value="NADP_OxRdtase_dom_sf"/>
</dbReference>
<dbReference type="PANTHER" id="PTHR43625">
    <property type="entry name" value="AFLATOXIN B1 ALDEHYDE REDUCTASE"/>
    <property type="match status" value="1"/>
</dbReference>
<dbReference type="PANTHER" id="PTHR43625:SF99">
    <property type="entry name" value="ALDO-KETO REDUCTASE 1-RELATED"/>
    <property type="match status" value="1"/>
</dbReference>
<dbReference type="Pfam" id="PF00248">
    <property type="entry name" value="Aldo_ket_red"/>
    <property type="match status" value="1"/>
</dbReference>
<dbReference type="SUPFAM" id="SSF51430">
    <property type="entry name" value="NAD(P)-linked oxidoreductase"/>
    <property type="match status" value="1"/>
</dbReference>
<reference key="1">
    <citation type="submission" date="2009-08" db="EMBL/GenBank/DDBJ databases">
        <authorList>
            <person name="Cheung F."/>
            <person name="Xiao Y."/>
            <person name="Chan A."/>
            <person name="Moskal W."/>
            <person name="Town C.D."/>
        </authorList>
    </citation>
    <scope>NUCLEOTIDE SEQUENCE [MRNA]</scope>
</reference>
<reference key="2">
    <citation type="journal article" date="2009" name="Mol. Cells">
        <title>Overexpression of GmAKR1, a stress-induced aldo/keto reductase from soybean, retards nodule development.</title>
        <authorList>
            <person name="Hur Y.S."/>
            <person name="Shin K.H."/>
            <person name="Kim S."/>
            <person name="Nam K.H."/>
            <person name="Lee M.S."/>
            <person name="Chun J.Y."/>
            <person name="Cheon C.I."/>
        </authorList>
    </citation>
    <scope>NUCLEOTIDE SEQUENCE [MRNA] OF 26-346</scope>
    <scope>INDUCTION</scope>
    <scope>TISSUE SPECIFICITY</scope>
    <scope>DEVELOPMENTAL STAGE</scope>
    <scope>FUNCTION</scope>
    <source>
        <strain>cv. Shinpaldal</strain>
    </source>
</reference>
<accession>C6TBN2</accession>
<accession>C0JRE4</accession>
<name>AKR1_SOYBN</name>
<organism>
    <name type="scientific">Glycine max</name>
    <name type="common">Soybean</name>
    <name type="synonym">Glycine hispida</name>
    <dbReference type="NCBI Taxonomy" id="3847"/>
    <lineage>
        <taxon>Eukaryota</taxon>
        <taxon>Viridiplantae</taxon>
        <taxon>Streptophyta</taxon>
        <taxon>Embryophyta</taxon>
        <taxon>Tracheophyta</taxon>
        <taxon>Spermatophyta</taxon>
        <taxon>Magnoliopsida</taxon>
        <taxon>eudicotyledons</taxon>
        <taxon>Gunneridae</taxon>
        <taxon>Pentapetalae</taxon>
        <taxon>rosids</taxon>
        <taxon>fabids</taxon>
        <taxon>Fabales</taxon>
        <taxon>Fabaceae</taxon>
        <taxon>Papilionoideae</taxon>
        <taxon>50 kb inversion clade</taxon>
        <taxon>NPAAA clade</taxon>
        <taxon>indigoferoid/millettioid clade</taxon>
        <taxon>Phaseoleae</taxon>
        <taxon>Glycine</taxon>
        <taxon>Glycine subgen. Soja</taxon>
    </lineage>
</organism>
<gene>
    <name type="primary">AKR1</name>
</gene>